<dbReference type="EC" id="7.1.2.2" evidence="1"/>
<dbReference type="EMBL" id="CP000680">
    <property type="protein sequence ID" value="ABP87355.1"/>
    <property type="molecule type" value="Genomic_DNA"/>
</dbReference>
<dbReference type="SMR" id="A4Y189"/>
<dbReference type="STRING" id="399739.Pmen_4609"/>
<dbReference type="KEGG" id="pmy:Pmen_4609"/>
<dbReference type="PATRIC" id="fig|399739.8.peg.4674"/>
<dbReference type="eggNOG" id="COG0056">
    <property type="taxonomic scope" value="Bacteria"/>
</dbReference>
<dbReference type="HOGENOM" id="CLU_010091_2_1_6"/>
<dbReference type="OrthoDB" id="9803053at2"/>
<dbReference type="SABIO-RK" id="A4Y189"/>
<dbReference type="GO" id="GO:0005886">
    <property type="term" value="C:plasma membrane"/>
    <property type="evidence" value="ECO:0007669"/>
    <property type="project" value="UniProtKB-SubCell"/>
</dbReference>
<dbReference type="GO" id="GO:0045259">
    <property type="term" value="C:proton-transporting ATP synthase complex"/>
    <property type="evidence" value="ECO:0007669"/>
    <property type="project" value="UniProtKB-KW"/>
</dbReference>
<dbReference type="GO" id="GO:0043531">
    <property type="term" value="F:ADP binding"/>
    <property type="evidence" value="ECO:0007669"/>
    <property type="project" value="TreeGrafter"/>
</dbReference>
<dbReference type="GO" id="GO:0005524">
    <property type="term" value="F:ATP binding"/>
    <property type="evidence" value="ECO:0007669"/>
    <property type="project" value="UniProtKB-UniRule"/>
</dbReference>
<dbReference type="GO" id="GO:0046933">
    <property type="term" value="F:proton-transporting ATP synthase activity, rotational mechanism"/>
    <property type="evidence" value="ECO:0007669"/>
    <property type="project" value="UniProtKB-UniRule"/>
</dbReference>
<dbReference type="CDD" id="cd18113">
    <property type="entry name" value="ATP-synt_F1_alpha_C"/>
    <property type="match status" value="1"/>
</dbReference>
<dbReference type="CDD" id="cd18116">
    <property type="entry name" value="ATP-synt_F1_alpha_N"/>
    <property type="match status" value="1"/>
</dbReference>
<dbReference type="CDD" id="cd01132">
    <property type="entry name" value="F1-ATPase_alpha_CD"/>
    <property type="match status" value="1"/>
</dbReference>
<dbReference type="FunFam" id="1.20.150.20:FF:000001">
    <property type="entry name" value="ATP synthase subunit alpha"/>
    <property type="match status" value="1"/>
</dbReference>
<dbReference type="FunFam" id="2.40.30.20:FF:000001">
    <property type="entry name" value="ATP synthase subunit alpha"/>
    <property type="match status" value="1"/>
</dbReference>
<dbReference type="FunFam" id="3.40.50.300:FF:000002">
    <property type="entry name" value="ATP synthase subunit alpha"/>
    <property type="match status" value="1"/>
</dbReference>
<dbReference type="Gene3D" id="2.40.30.20">
    <property type="match status" value="1"/>
</dbReference>
<dbReference type="Gene3D" id="1.20.150.20">
    <property type="entry name" value="ATP synthase alpha/beta chain, C-terminal domain"/>
    <property type="match status" value="1"/>
</dbReference>
<dbReference type="Gene3D" id="3.40.50.300">
    <property type="entry name" value="P-loop containing nucleotide triphosphate hydrolases"/>
    <property type="match status" value="1"/>
</dbReference>
<dbReference type="HAMAP" id="MF_01346">
    <property type="entry name" value="ATP_synth_alpha_bact"/>
    <property type="match status" value="1"/>
</dbReference>
<dbReference type="InterPro" id="IPR023366">
    <property type="entry name" value="ATP_synth_asu-like_sf"/>
</dbReference>
<dbReference type="InterPro" id="IPR000793">
    <property type="entry name" value="ATP_synth_asu_C"/>
</dbReference>
<dbReference type="InterPro" id="IPR038376">
    <property type="entry name" value="ATP_synth_asu_C_sf"/>
</dbReference>
<dbReference type="InterPro" id="IPR033732">
    <property type="entry name" value="ATP_synth_F1_a_nt-bd_dom"/>
</dbReference>
<dbReference type="InterPro" id="IPR005294">
    <property type="entry name" value="ATP_synth_F1_asu"/>
</dbReference>
<dbReference type="InterPro" id="IPR020003">
    <property type="entry name" value="ATPase_a/bsu_AS"/>
</dbReference>
<dbReference type="InterPro" id="IPR004100">
    <property type="entry name" value="ATPase_F1/V1/A1_a/bsu_N"/>
</dbReference>
<dbReference type="InterPro" id="IPR036121">
    <property type="entry name" value="ATPase_F1/V1/A1_a/bsu_N_sf"/>
</dbReference>
<dbReference type="InterPro" id="IPR000194">
    <property type="entry name" value="ATPase_F1/V1/A1_a/bsu_nucl-bd"/>
</dbReference>
<dbReference type="InterPro" id="IPR027417">
    <property type="entry name" value="P-loop_NTPase"/>
</dbReference>
<dbReference type="NCBIfam" id="TIGR00962">
    <property type="entry name" value="atpA"/>
    <property type="match status" value="1"/>
</dbReference>
<dbReference type="NCBIfam" id="NF009884">
    <property type="entry name" value="PRK13343.1"/>
    <property type="match status" value="1"/>
</dbReference>
<dbReference type="PANTHER" id="PTHR48082">
    <property type="entry name" value="ATP SYNTHASE SUBUNIT ALPHA, MITOCHONDRIAL"/>
    <property type="match status" value="1"/>
</dbReference>
<dbReference type="PANTHER" id="PTHR48082:SF2">
    <property type="entry name" value="ATP SYNTHASE SUBUNIT ALPHA, MITOCHONDRIAL"/>
    <property type="match status" value="1"/>
</dbReference>
<dbReference type="Pfam" id="PF00006">
    <property type="entry name" value="ATP-synt_ab"/>
    <property type="match status" value="1"/>
</dbReference>
<dbReference type="Pfam" id="PF00306">
    <property type="entry name" value="ATP-synt_ab_C"/>
    <property type="match status" value="1"/>
</dbReference>
<dbReference type="Pfam" id="PF02874">
    <property type="entry name" value="ATP-synt_ab_N"/>
    <property type="match status" value="1"/>
</dbReference>
<dbReference type="PIRSF" id="PIRSF039088">
    <property type="entry name" value="F_ATPase_subunit_alpha"/>
    <property type="match status" value="1"/>
</dbReference>
<dbReference type="SUPFAM" id="SSF47917">
    <property type="entry name" value="C-terminal domain of alpha and beta subunits of F1 ATP synthase"/>
    <property type="match status" value="1"/>
</dbReference>
<dbReference type="SUPFAM" id="SSF50615">
    <property type="entry name" value="N-terminal domain of alpha and beta subunits of F1 ATP synthase"/>
    <property type="match status" value="1"/>
</dbReference>
<dbReference type="SUPFAM" id="SSF52540">
    <property type="entry name" value="P-loop containing nucleoside triphosphate hydrolases"/>
    <property type="match status" value="1"/>
</dbReference>
<dbReference type="PROSITE" id="PS00152">
    <property type="entry name" value="ATPASE_ALPHA_BETA"/>
    <property type="match status" value="1"/>
</dbReference>
<accession>A4Y189</accession>
<proteinExistence type="inferred from homology"/>
<protein>
    <recommendedName>
        <fullName evidence="1">ATP synthase subunit alpha</fullName>
        <ecNumber evidence="1">7.1.2.2</ecNumber>
    </recommendedName>
    <alternativeName>
        <fullName evidence="1">ATP synthase F1 sector subunit alpha</fullName>
    </alternativeName>
    <alternativeName>
        <fullName evidence="1">F-ATPase subunit alpha</fullName>
    </alternativeName>
</protein>
<organism>
    <name type="scientific">Ectopseudomonas mendocina (strain ymp)</name>
    <name type="common">Pseudomonas mendocina</name>
    <dbReference type="NCBI Taxonomy" id="399739"/>
    <lineage>
        <taxon>Bacteria</taxon>
        <taxon>Pseudomonadati</taxon>
        <taxon>Pseudomonadota</taxon>
        <taxon>Gammaproteobacteria</taxon>
        <taxon>Pseudomonadales</taxon>
        <taxon>Pseudomonadaceae</taxon>
        <taxon>Ectopseudomonas</taxon>
    </lineage>
</organism>
<feature type="chain" id="PRO_1000067717" description="ATP synthase subunit alpha">
    <location>
        <begin position="1"/>
        <end position="514"/>
    </location>
</feature>
<feature type="binding site" evidence="1">
    <location>
        <begin position="170"/>
        <end position="177"/>
    </location>
    <ligand>
        <name>ATP</name>
        <dbReference type="ChEBI" id="CHEBI:30616"/>
    </ligand>
</feature>
<feature type="site" description="Required for activity" evidence="1">
    <location>
        <position position="374"/>
    </location>
</feature>
<evidence type="ECO:0000255" key="1">
    <source>
        <dbReference type="HAMAP-Rule" id="MF_01346"/>
    </source>
</evidence>
<gene>
    <name evidence="1" type="primary">atpA</name>
    <name type="ordered locus">Pmen_4609</name>
</gene>
<sequence length="514" mass="55349">MQQLNPSEISEIIKQRIESLDVTAQARNEGTIVSVSDGIVRIYGLADVMYGEMIEFPGGVYGMALNLEQDSVGAVVLGSYLTLAEGMSAKCTGRILEVPVGPELLGRVVDALGNPIDGKGPINAAASDAVEKVAPGVIWRKSVDQPVQTGYKSVDAMIPVGRGQRELIIGDRQIGKTALAVDAIINQKDSGIRCVYVAIGQKQSTIANVVRKLEEAGALANTIVVAASASESAALQFLAPYAGCTMGEYFRDRGEDALIVYDDLSKQAVAYRQISLLLRRPPGREAYPGDVFYLHSRLLERASRVSEEYVEKFTNGAVKGKTGSLTALPIIETQAGDVSAFVPTNVISITDGQIFLESAMFNSGIRPAVNAGISVSRVGGAAQTKIIKKLSGGIRTALAQYRELAAFAQFASDLDEATRKQLEHGQRVTELMKQKQYAPMSIAEMSVSLYAAERGFLQDVEVAKVISFEQALIAFFKRDHADLMAKINEKGDFNDEIDAGLKAGIEKFKATQTW</sequence>
<reference key="1">
    <citation type="submission" date="2007-04" db="EMBL/GenBank/DDBJ databases">
        <title>Complete sequence of Pseudomonas mendocina ymp.</title>
        <authorList>
            <consortium name="US DOE Joint Genome Institute"/>
            <person name="Copeland A."/>
            <person name="Lucas S."/>
            <person name="Lapidus A."/>
            <person name="Barry K."/>
            <person name="Glavina del Rio T."/>
            <person name="Dalin E."/>
            <person name="Tice H."/>
            <person name="Pitluck S."/>
            <person name="Kiss H."/>
            <person name="Brettin T."/>
            <person name="Detter J.C."/>
            <person name="Bruce D."/>
            <person name="Han C."/>
            <person name="Schmutz J."/>
            <person name="Larimer F."/>
            <person name="Land M."/>
            <person name="Hauser L."/>
            <person name="Kyrpides N."/>
            <person name="Mikhailova N."/>
            <person name="Hersman L."/>
            <person name="Dubois J."/>
            <person name="Maurice P."/>
            <person name="Richardson P."/>
        </authorList>
    </citation>
    <scope>NUCLEOTIDE SEQUENCE [LARGE SCALE GENOMIC DNA]</scope>
    <source>
        <strain>ymp</strain>
    </source>
</reference>
<keyword id="KW-0066">ATP synthesis</keyword>
<keyword id="KW-0067">ATP-binding</keyword>
<keyword id="KW-0997">Cell inner membrane</keyword>
<keyword id="KW-1003">Cell membrane</keyword>
<keyword id="KW-0139">CF(1)</keyword>
<keyword id="KW-0375">Hydrogen ion transport</keyword>
<keyword id="KW-0406">Ion transport</keyword>
<keyword id="KW-0472">Membrane</keyword>
<keyword id="KW-0547">Nucleotide-binding</keyword>
<keyword id="KW-1278">Translocase</keyword>
<keyword id="KW-0813">Transport</keyword>
<comment type="function">
    <text evidence="1">Produces ATP from ADP in the presence of a proton gradient across the membrane. The alpha chain is a regulatory subunit.</text>
</comment>
<comment type="catalytic activity">
    <reaction evidence="1">
        <text>ATP + H2O + 4 H(+)(in) = ADP + phosphate + 5 H(+)(out)</text>
        <dbReference type="Rhea" id="RHEA:57720"/>
        <dbReference type="ChEBI" id="CHEBI:15377"/>
        <dbReference type="ChEBI" id="CHEBI:15378"/>
        <dbReference type="ChEBI" id="CHEBI:30616"/>
        <dbReference type="ChEBI" id="CHEBI:43474"/>
        <dbReference type="ChEBI" id="CHEBI:456216"/>
        <dbReference type="EC" id="7.1.2.2"/>
    </reaction>
</comment>
<comment type="subunit">
    <text evidence="1">F-type ATPases have 2 components, CF(1) - the catalytic core - and CF(0) - the membrane proton channel. CF(1) has five subunits: alpha(3), beta(3), gamma(1), delta(1), epsilon(1). CF(0) has three main subunits: a(1), b(2) and c(9-12). The alpha and beta chains form an alternating ring which encloses part of the gamma chain. CF(1) is attached to CF(0) by a central stalk formed by the gamma and epsilon chains, while a peripheral stalk is formed by the delta and b chains.</text>
</comment>
<comment type="subcellular location">
    <subcellularLocation>
        <location evidence="1">Cell inner membrane</location>
        <topology evidence="1">Peripheral membrane protein</topology>
    </subcellularLocation>
</comment>
<comment type="similarity">
    <text evidence="1">Belongs to the ATPase alpha/beta chains family.</text>
</comment>
<name>ATPA_ECTM1</name>